<proteinExistence type="inferred from homology"/>
<organism>
    <name type="scientific">Beijerinckia indica subsp. indica (strain ATCC 9039 / DSM 1715 / NCIMB 8712)</name>
    <dbReference type="NCBI Taxonomy" id="395963"/>
    <lineage>
        <taxon>Bacteria</taxon>
        <taxon>Pseudomonadati</taxon>
        <taxon>Pseudomonadota</taxon>
        <taxon>Alphaproteobacteria</taxon>
        <taxon>Hyphomicrobiales</taxon>
        <taxon>Beijerinckiaceae</taxon>
        <taxon>Beijerinckia</taxon>
    </lineage>
</organism>
<dbReference type="EC" id="4.6.1.17" evidence="1"/>
<dbReference type="EMBL" id="CP001016">
    <property type="protein sequence ID" value="ACB95057.1"/>
    <property type="molecule type" value="Genomic_DNA"/>
</dbReference>
<dbReference type="RefSeq" id="WP_012384414.1">
    <property type="nucleotide sequence ID" value="NC_010581.1"/>
</dbReference>
<dbReference type="SMR" id="B2IKL8"/>
<dbReference type="STRING" id="395963.Bind_1417"/>
<dbReference type="KEGG" id="bid:Bind_1417"/>
<dbReference type="eggNOG" id="COG0315">
    <property type="taxonomic scope" value="Bacteria"/>
</dbReference>
<dbReference type="HOGENOM" id="CLU_074693_1_1_5"/>
<dbReference type="OrthoDB" id="9794429at2"/>
<dbReference type="UniPathway" id="UPA00344"/>
<dbReference type="Proteomes" id="UP000001695">
    <property type="component" value="Chromosome"/>
</dbReference>
<dbReference type="GO" id="GO:0061799">
    <property type="term" value="F:cyclic pyranopterin monophosphate synthase activity"/>
    <property type="evidence" value="ECO:0007669"/>
    <property type="project" value="UniProtKB-UniRule"/>
</dbReference>
<dbReference type="GO" id="GO:0006777">
    <property type="term" value="P:Mo-molybdopterin cofactor biosynthetic process"/>
    <property type="evidence" value="ECO:0007669"/>
    <property type="project" value="UniProtKB-UniRule"/>
</dbReference>
<dbReference type="CDD" id="cd01420">
    <property type="entry name" value="MoaC_PE"/>
    <property type="match status" value="1"/>
</dbReference>
<dbReference type="Gene3D" id="3.30.70.640">
    <property type="entry name" value="Molybdopterin cofactor biosynthesis C (MoaC) domain"/>
    <property type="match status" value="1"/>
</dbReference>
<dbReference type="HAMAP" id="MF_01224_B">
    <property type="entry name" value="MoaC_B"/>
    <property type="match status" value="1"/>
</dbReference>
<dbReference type="InterPro" id="IPR023045">
    <property type="entry name" value="MoaC"/>
</dbReference>
<dbReference type="InterPro" id="IPR047594">
    <property type="entry name" value="MoaC_bact/euk"/>
</dbReference>
<dbReference type="InterPro" id="IPR036522">
    <property type="entry name" value="MoaC_sf"/>
</dbReference>
<dbReference type="InterPro" id="IPR050105">
    <property type="entry name" value="MoCo_biosynth_MoaA/MoaC"/>
</dbReference>
<dbReference type="InterPro" id="IPR002820">
    <property type="entry name" value="Mopterin_CF_biosynth-C_dom"/>
</dbReference>
<dbReference type="NCBIfam" id="TIGR00581">
    <property type="entry name" value="moaC"/>
    <property type="match status" value="1"/>
</dbReference>
<dbReference type="NCBIfam" id="NF006870">
    <property type="entry name" value="PRK09364.1"/>
    <property type="match status" value="1"/>
</dbReference>
<dbReference type="PANTHER" id="PTHR22960">
    <property type="entry name" value="MOLYBDOPTERIN COFACTOR SYNTHESIS PROTEIN A"/>
    <property type="match status" value="1"/>
</dbReference>
<dbReference type="Pfam" id="PF01967">
    <property type="entry name" value="MoaC"/>
    <property type="match status" value="1"/>
</dbReference>
<dbReference type="SUPFAM" id="SSF55040">
    <property type="entry name" value="Molybdenum cofactor biosynthesis protein C, MoaC"/>
    <property type="match status" value="1"/>
</dbReference>
<keyword id="KW-0456">Lyase</keyword>
<keyword id="KW-0501">Molybdenum cofactor biosynthesis</keyword>
<keyword id="KW-1185">Reference proteome</keyword>
<name>MOAC_BEII9</name>
<comment type="function">
    <text evidence="1">Catalyzes the conversion of (8S)-3',8-cyclo-7,8-dihydroguanosine 5'-triphosphate to cyclic pyranopterin monophosphate (cPMP).</text>
</comment>
<comment type="catalytic activity">
    <reaction evidence="1">
        <text>(8S)-3',8-cyclo-7,8-dihydroguanosine 5'-triphosphate = cyclic pyranopterin phosphate + diphosphate</text>
        <dbReference type="Rhea" id="RHEA:49580"/>
        <dbReference type="ChEBI" id="CHEBI:33019"/>
        <dbReference type="ChEBI" id="CHEBI:59648"/>
        <dbReference type="ChEBI" id="CHEBI:131766"/>
        <dbReference type="EC" id="4.6.1.17"/>
    </reaction>
</comment>
<comment type="pathway">
    <text evidence="1">Cofactor biosynthesis; molybdopterin biosynthesis.</text>
</comment>
<comment type="subunit">
    <text evidence="1">Homohexamer; trimer of dimers.</text>
</comment>
<comment type="similarity">
    <text evidence="1">Belongs to the MoaC family.</text>
</comment>
<protein>
    <recommendedName>
        <fullName evidence="1">Cyclic pyranopterin monophosphate synthase</fullName>
        <ecNumber evidence="1">4.6.1.17</ecNumber>
    </recommendedName>
    <alternativeName>
        <fullName evidence="1">Molybdenum cofactor biosynthesis protein C</fullName>
    </alternativeName>
</protein>
<evidence type="ECO:0000255" key="1">
    <source>
        <dbReference type="HAMAP-Rule" id="MF_01224"/>
    </source>
</evidence>
<sequence>MSSLTHLTSHGEAVMVDVSDKAETERVAIAEARVVMRMETLELALSGNAEKGDVVATARIAGIMAAKKTHELIPLCHPLLLTKVGVDLEPDPSLPGFRVQALAKVKGQTGVEMEALTAVSVACLTLYDMLKAVDRFMRIEGIGLLEKQGGKSGSWKREKE</sequence>
<gene>
    <name evidence="1" type="primary">moaC</name>
    <name type="ordered locus">Bind_1417</name>
</gene>
<feature type="chain" id="PRO_1000139247" description="Cyclic pyranopterin monophosphate synthase">
    <location>
        <begin position="1"/>
        <end position="160"/>
    </location>
</feature>
<feature type="active site" evidence="1">
    <location>
        <position position="128"/>
    </location>
</feature>
<feature type="binding site" evidence="1">
    <location>
        <begin position="75"/>
        <end position="77"/>
    </location>
    <ligand>
        <name>substrate</name>
    </ligand>
</feature>
<feature type="binding site" evidence="1">
    <location>
        <begin position="113"/>
        <end position="114"/>
    </location>
    <ligand>
        <name>substrate</name>
    </ligand>
</feature>
<reference key="1">
    <citation type="journal article" date="2010" name="J. Bacteriol.">
        <title>Complete genome sequence of Beijerinckia indica subsp. indica.</title>
        <authorList>
            <person name="Tamas I."/>
            <person name="Dedysh S.N."/>
            <person name="Liesack W."/>
            <person name="Stott M.B."/>
            <person name="Alam M."/>
            <person name="Murrell J.C."/>
            <person name="Dunfield P.F."/>
        </authorList>
    </citation>
    <scope>NUCLEOTIDE SEQUENCE [LARGE SCALE GENOMIC DNA]</scope>
    <source>
        <strain>ATCC 9039 / DSM 1715 / NCIMB 8712</strain>
    </source>
</reference>
<accession>B2IKL8</accession>